<reference key="1">
    <citation type="journal article" date="2007" name="PLoS Genet.">
        <title>Patterns and implications of gene gain and loss in the evolution of Prochlorococcus.</title>
        <authorList>
            <person name="Kettler G.C."/>
            <person name="Martiny A.C."/>
            <person name="Huang K."/>
            <person name="Zucker J."/>
            <person name="Coleman M.L."/>
            <person name="Rodrigue S."/>
            <person name="Chen F."/>
            <person name="Lapidus A."/>
            <person name="Ferriera S."/>
            <person name="Johnson J."/>
            <person name="Steglich C."/>
            <person name="Church G.M."/>
            <person name="Richardson P."/>
            <person name="Chisholm S.W."/>
        </authorList>
    </citation>
    <scope>NUCLEOTIDE SEQUENCE [LARGE SCALE GENOMIC DNA]</scope>
    <source>
        <strain>NATL1A</strain>
    </source>
</reference>
<sequence length="304" mass="33708">MKEGPISSSSNFNHVPVMGKEIIQSLKELPSELTKQGLIIDATIGGGGHSAQILENFPGIKIIGLDQDPMAREAASKKLIKFGTRIKIISTNFADFSLDEQAICVLADLGVSSHQLDEPSRGFSFRLNGPIDMRMNPKEGSSAAELIETLSEQNLADLIYELGEEKRSRRIARKIKNDLAENGPYSGTQDLSYAIAGCFPPKQRYGRIHPSTRTFQALRIAVNNELGSLESLLLKAPNWLLENGLFMVMSFHSLEDRRVKSSFKTDNRLKVLSKKPIRASPEEIELNPRSKSAKLRISAKKFLT</sequence>
<evidence type="ECO:0000255" key="1">
    <source>
        <dbReference type="HAMAP-Rule" id="MF_01007"/>
    </source>
</evidence>
<feature type="chain" id="PRO_0000387044" description="Ribosomal RNA small subunit methyltransferase H">
    <location>
        <begin position="1"/>
        <end position="304"/>
    </location>
</feature>
<feature type="binding site" evidence="1">
    <location>
        <begin position="47"/>
        <end position="49"/>
    </location>
    <ligand>
        <name>S-adenosyl-L-methionine</name>
        <dbReference type="ChEBI" id="CHEBI:59789"/>
    </ligand>
</feature>
<feature type="binding site" evidence="1">
    <location>
        <position position="66"/>
    </location>
    <ligand>
        <name>S-adenosyl-L-methionine</name>
        <dbReference type="ChEBI" id="CHEBI:59789"/>
    </ligand>
</feature>
<feature type="binding site" evidence="1">
    <location>
        <position position="93"/>
    </location>
    <ligand>
        <name>S-adenosyl-L-methionine</name>
        <dbReference type="ChEBI" id="CHEBI:59789"/>
    </ligand>
</feature>
<feature type="binding site" evidence="1">
    <location>
        <position position="108"/>
    </location>
    <ligand>
        <name>S-adenosyl-L-methionine</name>
        <dbReference type="ChEBI" id="CHEBI:59789"/>
    </ligand>
</feature>
<feature type="binding site" evidence="1">
    <location>
        <position position="115"/>
    </location>
    <ligand>
        <name>S-adenosyl-L-methionine</name>
        <dbReference type="ChEBI" id="CHEBI:59789"/>
    </ligand>
</feature>
<accession>A2C000</accession>
<organism>
    <name type="scientific">Prochlorococcus marinus (strain NATL1A)</name>
    <dbReference type="NCBI Taxonomy" id="167555"/>
    <lineage>
        <taxon>Bacteria</taxon>
        <taxon>Bacillati</taxon>
        <taxon>Cyanobacteriota</taxon>
        <taxon>Cyanophyceae</taxon>
        <taxon>Synechococcales</taxon>
        <taxon>Prochlorococcaceae</taxon>
        <taxon>Prochlorococcus</taxon>
    </lineage>
</organism>
<keyword id="KW-0963">Cytoplasm</keyword>
<keyword id="KW-0489">Methyltransferase</keyword>
<keyword id="KW-0698">rRNA processing</keyword>
<keyword id="KW-0949">S-adenosyl-L-methionine</keyword>
<keyword id="KW-0808">Transferase</keyword>
<comment type="function">
    <text evidence="1">Specifically methylates the N4 position of cytidine in position 1402 (C1402) of 16S rRNA.</text>
</comment>
<comment type="catalytic activity">
    <reaction evidence="1">
        <text>cytidine(1402) in 16S rRNA + S-adenosyl-L-methionine = N(4)-methylcytidine(1402) in 16S rRNA + S-adenosyl-L-homocysteine + H(+)</text>
        <dbReference type="Rhea" id="RHEA:42928"/>
        <dbReference type="Rhea" id="RHEA-COMP:10286"/>
        <dbReference type="Rhea" id="RHEA-COMP:10287"/>
        <dbReference type="ChEBI" id="CHEBI:15378"/>
        <dbReference type="ChEBI" id="CHEBI:57856"/>
        <dbReference type="ChEBI" id="CHEBI:59789"/>
        <dbReference type="ChEBI" id="CHEBI:74506"/>
        <dbReference type="ChEBI" id="CHEBI:82748"/>
        <dbReference type="EC" id="2.1.1.199"/>
    </reaction>
</comment>
<comment type="subcellular location">
    <subcellularLocation>
        <location evidence="1">Cytoplasm</location>
    </subcellularLocation>
</comment>
<comment type="similarity">
    <text evidence="1">Belongs to the methyltransferase superfamily. RsmH family.</text>
</comment>
<name>RSMH_PROM1</name>
<proteinExistence type="inferred from homology"/>
<gene>
    <name evidence="1" type="primary">rsmH</name>
    <name type="synonym">mraW</name>
    <name type="ordered locus">NATL1_02461</name>
</gene>
<protein>
    <recommendedName>
        <fullName evidence="1">Ribosomal RNA small subunit methyltransferase H</fullName>
        <ecNumber evidence="1">2.1.1.199</ecNumber>
    </recommendedName>
    <alternativeName>
        <fullName evidence="1">16S rRNA m(4)C1402 methyltransferase</fullName>
    </alternativeName>
    <alternativeName>
        <fullName evidence="1">rRNA (cytosine-N(4)-)-methyltransferase RsmH</fullName>
    </alternativeName>
</protein>
<dbReference type="EC" id="2.1.1.199" evidence="1"/>
<dbReference type="EMBL" id="CP000553">
    <property type="protein sequence ID" value="ABM74810.1"/>
    <property type="molecule type" value="Genomic_DNA"/>
</dbReference>
<dbReference type="RefSeq" id="WP_011823030.1">
    <property type="nucleotide sequence ID" value="NC_008819.1"/>
</dbReference>
<dbReference type="SMR" id="A2C000"/>
<dbReference type="KEGG" id="pme:NATL1_02461"/>
<dbReference type="eggNOG" id="COG0275">
    <property type="taxonomic scope" value="Bacteria"/>
</dbReference>
<dbReference type="HOGENOM" id="CLU_038422_3_0_3"/>
<dbReference type="Proteomes" id="UP000002592">
    <property type="component" value="Chromosome"/>
</dbReference>
<dbReference type="GO" id="GO:0005737">
    <property type="term" value="C:cytoplasm"/>
    <property type="evidence" value="ECO:0007669"/>
    <property type="project" value="UniProtKB-SubCell"/>
</dbReference>
<dbReference type="GO" id="GO:0071424">
    <property type="term" value="F:rRNA (cytosine-N4-)-methyltransferase activity"/>
    <property type="evidence" value="ECO:0007669"/>
    <property type="project" value="UniProtKB-UniRule"/>
</dbReference>
<dbReference type="GO" id="GO:0070475">
    <property type="term" value="P:rRNA base methylation"/>
    <property type="evidence" value="ECO:0007669"/>
    <property type="project" value="UniProtKB-UniRule"/>
</dbReference>
<dbReference type="CDD" id="cd02440">
    <property type="entry name" value="AdoMet_MTases"/>
    <property type="match status" value="1"/>
</dbReference>
<dbReference type="Gene3D" id="1.10.150.170">
    <property type="entry name" value="Putative methyltransferase TM0872, insert domain"/>
    <property type="match status" value="1"/>
</dbReference>
<dbReference type="Gene3D" id="3.40.50.150">
    <property type="entry name" value="Vaccinia Virus protein VP39"/>
    <property type="match status" value="1"/>
</dbReference>
<dbReference type="HAMAP" id="MF_01007">
    <property type="entry name" value="16SrRNA_methyltr_H"/>
    <property type="match status" value="1"/>
</dbReference>
<dbReference type="InterPro" id="IPR002903">
    <property type="entry name" value="RsmH"/>
</dbReference>
<dbReference type="InterPro" id="IPR023397">
    <property type="entry name" value="SAM-dep_MeTrfase_MraW_recog"/>
</dbReference>
<dbReference type="InterPro" id="IPR029063">
    <property type="entry name" value="SAM-dependent_MTases_sf"/>
</dbReference>
<dbReference type="NCBIfam" id="TIGR00006">
    <property type="entry name" value="16S rRNA (cytosine(1402)-N(4))-methyltransferase RsmH"/>
    <property type="match status" value="1"/>
</dbReference>
<dbReference type="PANTHER" id="PTHR11265:SF0">
    <property type="entry name" value="12S RRNA N4-METHYLCYTIDINE METHYLTRANSFERASE"/>
    <property type="match status" value="1"/>
</dbReference>
<dbReference type="PANTHER" id="PTHR11265">
    <property type="entry name" value="S-ADENOSYL-METHYLTRANSFERASE MRAW"/>
    <property type="match status" value="1"/>
</dbReference>
<dbReference type="Pfam" id="PF01795">
    <property type="entry name" value="Methyltransf_5"/>
    <property type="match status" value="1"/>
</dbReference>
<dbReference type="PIRSF" id="PIRSF004486">
    <property type="entry name" value="MraW"/>
    <property type="match status" value="1"/>
</dbReference>
<dbReference type="SUPFAM" id="SSF81799">
    <property type="entry name" value="Putative methyltransferase TM0872, insert domain"/>
    <property type="match status" value="1"/>
</dbReference>
<dbReference type="SUPFAM" id="SSF53335">
    <property type="entry name" value="S-adenosyl-L-methionine-dependent methyltransferases"/>
    <property type="match status" value="1"/>
</dbReference>